<reference key="1">
    <citation type="journal article" date="2002" name="Genome Res.">
        <title>A complete sequence of the T. tengcongensis genome.</title>
        <authorList>
            <person name="Bao Q."/>
            <person name="Tian Y."/>
            <person name="Li W."/>
            <person name="Xu Z."/>
            <person name="Xuan Z."/>
            <person name="Hu S."/>
            <person name="Dong W."/>
            <person name="Yang J."/>
            <person name="Chen Y."/>
            <person name="Xue Y."/>
            <person name="Xu Y."/>
            <person name="Lai X."/>
            <person name="Huang L."/>
            <person name="Dong X."/>
            <person name="Ma Y."/>
            <person name="Ling L."/>
            <person name="Tan H."/>
            <person name="Chen R."/>
            <person name="Wang J."/>
            <person name="Yu J."/>
            <person name="Yang H."/>
        </authorList>
    </citation>
    <scope>NUCLEOTIDE SEQUENCE [LARGE SCALE GENOMIC DNA]</scope>
    <source>
        <strain>DSM 15242 / JCM 11007 / NBRC 100824 / MB4</strain>
    </source>
</reference>
<feature type="chain" id="PRO_0000092120" description="Putative ABC transporter ATP-binding protein TTE1589">
    <location>
        <begin position="1"/>
        <end position="569"/>
    </location>
</feature>
<feature type="domain" description="ABC transporter 1" evidence="2">
    <location>
        <begin position="8"/>
        <end position="248"/>
    </location>
</feature>
<feature type="domain" description="ABC transporter 2" evidence="2">
    <location>
        <begin position="309"/>
        <end position="542"/>
    </location>
</feature>
<feature type="binding site" evidence="2">
    <location>
        <begin position="43"/>
        <end position="50"/>
    </location>
    <ligand>
        <name>ATP</name>
        <dbReference type="ChEBI" id="CHEBI:30616"/>
        <label>1</label>
    </ligand>
</feature>
<feature type="binding site" evidence="2">
    <location>
        <begin position="342"/>
        <end position="349"/>
    </location>
    <ligand>
        <name>ATP</name>
        <dbReference type="ChEBI" id="CHEBI:30616"/>
        <label>2</label>
    </ligand>
</feature>
<gene>
    <name type="ordered locus">TTE1589</name>
</gene>
<proteinExistence type="inferred from homology"/>
<keyword id="KW-0067">ATP-binding</keyword>
<keyword id="KW-1003">Cell membrane</keyword>
<keyword id="KW-0472">Membrane</keyword>
<keyword id="KW-0547">Nucleotide-binding</keyword>
<keyword id="KW-1185">Reference proteome</keyword>
<keyword id="KW-0677">Repeat</keyword>
<keyword id="KW-1278">Translocase</keyword>
<keyword id="KW-0813">Transport</keyword>
<organism>
    <name type="scientific">Caldanaerobacter subterraneus subsp. tengcongensis (strain DSM 15242 / JCM 11007 / NBRC 100824 / MB4)</name>
    <name type="common">Thermoanaerobacter tengcongensis</name>
    <dbReference type="NCBI Taxonomy" id="273068"/>
    <lineage>
        <taxon>Bacteria</taxon>
        <taxon>Bacillati</taxon>
        <taxon>Bacillota</taxon>
        <taxon>Clostridia</taxon>
        <taxon>Thermoanaerobacterales</taxon>
        <taxon>Thermoanaerobacteraceae</taxon>
        <taxon>Caldanaerobacter</taxon>
    </lineage>
</organism>
<dbReference type="EC" id="7.-.-.-"/>
<dbReference type="EMBL" id="AE008691">
    <property type="protein sequence ID" value="AAM24793.1"/>
    <property type="molecule type" value="Genomic_DNA"/>
</dbReference>
<dbReference type="RefSeq" id="WP_009610073.1">
    <property type="nucleotide sequence ID" value="NZ_JANUCV010000001.1"/>
</dbReference>
<dbReference type="SMR" id="Q8R9L8"/>
<dbReference type="STRING" id="273068.TTE1589"/>
<dbReference type="TCDB" id="3.A.1.33.1">
    <property type="family name" value="the atp-binding cassette (abc) superfamily"/>
</dbReference>
<dbReference type="KEGG" id="tte:TTE1589"/>
<dbReference type="eggNOG" id="COG1122">
    <property type="taxonomic scope" value="Bacteria"/>
</dbReference>
<dbReference type="HOGENOM" id="CLU_000604_86_7_9"/>
<dbReference type="OrthoDB" id="501320at2"/>
<dbReference type="Proteomes" id="UP000000555">
    <property type="component" value="Chromosome"/>
</dbReference>
<dbReference type="GO" id="GO:0043190">
    <property type="term" value="C:ATP-binding cassette (ABC) transporter complex"/>
    <property type="evidence" value="ECO:0007669"/>
    <property type="project" value="TreeGrafter"/>
</dbReference>
<dbReference type="GO" id="GO:0005524">
    <property type="term" value="F:ATP binding"/>
    <property type="evidence" value="ECO:0007669"/>
    <property type="project" value="UniProtKB-KW"/>
</dbReference>
<dbReference type="GO" id="GO:0016887">
    <property type="term" value="F:ATP hydrolysis activity"/>
    <property type="evidence" value="ECO:0007669"/>
    <property type="project" value="InterPro"/>
</dbReference>
<dbReference type="GO" id="GO:0042626">
    <property type="term" value="F:ATPase-coupled transmembrane transporter activity"/>
    <property type="evidence" value="ECO:0007669"/>
    <property type="project" value="TreeGrafter"/>
</dbReference>
<dbReference type="CDD" id="cd03225">
    <property type="entry name" value="ABC_cobalt_CbiO_domain1"/>
    <property type="match status" value="2"/>
</dbReference>
<dbReference type="FunFam" id="3.40.50.300:FF:000224">
    <property type="entry name" value="Energy-coupling factor transporter ATP-binding protein EcfA"/>
    <property type="match status" value="2"/>
</dbReference>
<dbReference type="Gene3D" id="3.40.50.300">
    <property type="entry name" value="P-loop containing nucleotide triphosphate hydrolases"/>
    <property type="match status" value="2"/>
</dbReference>
<dbReference type="InterPro" id="IPR003593">
    <property type="entry name" value="AAA+_ATPase"/>
</dbReference>
<dbReference type="InterPro" id="IPR003439">
    <property type="entry name" value="ABC_transporter-like_ATP-bd"/>
</dbReference>
<dbReference type="InterPro" id="IPR017871">
    <property type="entry name" value="ABC_transporter-like_CS"/>
</dbReference>
<dbReference type="InterPro" id="IPR015856">
    <property type="entry name" value="ABC_transpr_CbiO/EcfA_su"/>
</dbReference>
<dbReference type="InterPro" id="IPR050095">
    <property type="entry name" value="ECF_ABC_transporter_ATP-bd"/>
</dbReference>
<dbReference type="InterPro" id="IPR027417">
    <property type="entry name" value="P-loop_NTPase"/>
</dbReference>
<dbReference type="NCBIfam" id="NF010167">
    <property type="entry name" value="PRK13648.1"/>
    <property type="match status" value="2"/>
</dbReference>
<dbReference type="PANTHER" id="PTHR43553:SF24">
    <property type="entry name" value="ENERGY-COUPLING FACTOR TRANSPORTER ATP-BINDING PROTEIN ECFA1"/>
    <property type="match status" value="1"/>
</dbReference>
<dbReference type="PANTHER" id="PTHR43553">
    <property type="entry name" value="HEAVY METAL TRANSPORTER"/>
    <property type="match status" value="1"/>
</dbReference>
<dbReference type="Pfam" id="PF00005">
    <property type="entry name" value="ABC_tran"/>
    <property type="match status" value="2"/>
</dbReference>
<dbReference type="SMART" id="SM00382">
    <property type="entry name" value="AAA"/>
    <property type="match status" value="2"/>
</dbReference>
<dbReference type="SUPFAM" id="SSF52540">
    <property type="entry name" value="P-loop containing nucleoside triphosphate hydrolases"/>
    <property type="match status" value="2"/>
</dbReference>
<dbReference type="PROSITE" id="PS00211">
    <property type="entry name" value="ABC_TRANSPORTER_1"/>
    <property type="match status" value="2"/>
</dbReference>
<dbReference type="PROSITE" id="PS50893">
    <property type="entry name" value="ABC_TRANSPORTER_2"/>
    <property type="match status" value="2"/>
</dbReference>
<name>Y1589_CALS4</name>
<evidence type="ECO:0000250" key="1"/>
<evidence type="ECO:0000255" key="2">
    <source>
        <dbReference type="PROSITE-ProRule" id="PRU00434"/>
    </source>
</evidence>
<evidence type="ECO:0000305" key="3"/>
<protein>
    <recommendedName>
        <fullName>Putative ABC transporter ATP-binding protein TTE1589</fullName>
        <ecNumber>7.-.-.-</ecNumber>
    </recommendedName>
</protein>
<sequence length="569" mass="64174">MTLSDKEIIVKDLTFRYKEQKDRNAIEGINLEVEKGEFIVIMGPSGAGKSTLAQCLNGLIPHFTKGHYSGEVVVRGIKVKETPVSKMAKEIGLVFQDFEAQLFSTNTKLEIAFGPENFGVPREEIEEIIRRVLKIVNLEGLEDRPPSTLSGGQKQRLAIGSVLACMPSILCMDEPTTDLDPIGKIGVFNIARELHEEKELTLIIIEHETEEALNADRIILMEKGKIIKDGKPREVLKEVDLMEKIGLMPLQIPKYFSQVSNLEKADLPLTYEEGVQKFKELGLQIDEGKYQEILRREDEREKSYGDVIIQAKDVEYVYSNGTKALDGINLEIREGEFIALLGHNGSGKTTLAKHFNCLLKPTRGSVIVYGKDTKNSNVYEIGNYVGYAFQNPDHQIFADTVYDEIAFGPRMRGCTEEEVKERVAEALKAVDMEGFEKEDPFALSKGERQRIAVASILAARPKVIILDEPTTGLDYKEQKRMMELVKRLNESGHTIIMITHTMWIVAEYAHKVAVMRDGKIEMYGKVRDVFKEEERLLELSLKPPSIVSLSNRLGKTFLSVEEMVSCTKR</sequence>
<comment type="function">
    <text evidence="1">Probably part of an ABC transporter complex. Responsible for energy coupling to the transport system (By similarity).</text>
</comment>
<comment type="subcellular location">
    <subcellularLocation>
        <location evidence="1">Cell membrane</location>
        <topology evidence="1">Peripheral membrane protein</topology>
    </subcellularLocation>
</comment>
<comment type="similarity">
    <text evidence="3">Belongs to the ABC transporter superfamily.</text>
</comment>
<accession>Q8R9L8</accession>